<name>APE2_CANAL</name>
<proteinExistence type="evidence at protein level"/>
<sequence length="924" mass="104382">MASNNTSQRSGFSSFFCRLKTYFCNHFLCLFVLSFFPLSFRRLCLLCHLCEKSNLWLSSDNSASVVKQEREVLPTNVKPLHYDLTIEPIFDNFTFKGEETIDFQVNEKTNFITLNSLEIEVQEAKIDGKSVTDISFDAGKQTVTFKFDDDLSTGSIAKLYIKFTGELNDKMAGFYRASYQEDGKTKYMATTQMEPTDCRRAFPSYDEPAAKSKFTISLIADKELVCLSNSSEKETVSLDGNKKKVTFQTTPLMSTYLVAFIVGDLRYISNDNYRVPIRVYSTPGTEHLGEYSANIAAQTLKFFDQQFGIDYPYDKLDMVAVPSFSAGAMENCGLVTFRTVDLLIDADNANVNTKQRVTEVVMHELAHQWFGDLVTMEFWDGLWLNEGFATWMSWYACNSLYPDWKVWESYVSDSLQHALTLDALRASHPIEVPVKRADEINQIFDAISYSKGSSLLRMISKWLGEDVFVKGVSNYLKKHKWGNTKTSDLWEALSEASGEDVVKVMDIWTKNIGFPIVKVEEIGNGEIKVTQNRFLATGDVKESEDKTLYPVFLGLKTSEGVDESSVLETRSKTIKLPTSDDFFKINGDQSGIYRTAYEPARWTKLGKAGVEGKLSVEDRVGLVADAGSLASSGFIKTSSLLDLVKSWSKESNYVVWNEILTRIGSIKAALMFEDEATKKALEIFTRDLISEKLKETGWEFSADDSFADQQLKSSLFASAANAEDPEAVAFAKEAFAKFIAGDKKAIHPNLRASIFNTNAKYGDEKTFDELYNIYRNPSSVEEKIAALRSFGRFTKPEILDKVTGLLLQTDIVKQQDIYIPMQGLRAHKLGVEKLWTWLSENWDQIYILLPPGLSMLGSVVTLGTSGFTKEEQKKKVEEFFAQKDNKGYDQSLAQSLDIITAKSKWTDRDAKSIYEWLEANEYTK</sequence>
<dbReference type="EC" id="3.4.11.-"/>
<dbReference type="EMBL" id="CP017623">
    <property type="protein sequence ID" value="AOW26114.1"/>
    <property type="molecule type" value="Genomic_DNA"/>
</dbReference>
<dbReference type="RefSeq" id="XP_019330640.1">
    <property type="nucleotide sequence ID" value="XM_019475095.1"/>
</dbReference>
<dbReference type="SMR" id="Q59KZ1"/>
<dbReference type="FunCoup" id="Q59KZ1">
    <property type="interactions" value="1065"/>
</dbReference>
<dbReference type="STRING" id="237561.Q59KZ1"/>
<dbReference type="MEROPS" id="M01.006"/>
<dbReference type="GlyCosmos" id="Q59KZ1">
    <property type="glycosylation" value="2 sites, No reported glycans"/>
</dbReference>
<dbReference type="iPTMnet" id="Q59KZ1"/>
<dbReference type="EnsemblFungi" id="C1_04400C_A-T">
    <property type="protein sequence ID" value="C1_04400C_A-T-p1"/>
    <property type="gene ID" value="C1_04400C_A"/>
</dbReference>
<dbReference type="GeneID" id="3647990"/>
<dbReference type="KEGG" id="cal:CAALFM_C104400CA"/>
<dbReference type="CGD" id="CAL0000186164">
    <property type="gene designation" value="APE2"/>
</dbReference>
<dbReference type="VEuPathDB" id="FungiDB:C1_04400C_A"/>
<dbReference type="eggNOG" id="KOG1046">
    <property type="taxonomic scope" value="Eukaryota"/>
</dbReference>
<dbReference type="HOGENOM" id="CLU_003705_0_1_1"/>
<dbReference type="InParanoid" id="Q59KZ1"/>
<dbReference type="OMA" id="MMEYVAI"/>
<dbReference type="OrthoDB" id="10031169at2759"/>
<dbReference type="PRO" id="PR:Q59KZ1"/>
<dbReference type="Proteomes" id="UP000000559">
    <property type="component" value="Chromosome 1"/>
</dbReference>
<dbReference type="GO" id="GO:0005737">
    <property type="term" value="C:cytoplasm"/>
    <property type="evidence" value="ECO:0000318"/>
    <property type="project" value="GO_Central"/>
</dbReference>
<dbReference type="GO" id="GO:0005576">
    <property type="term" value="C:extracellular region"/>
    <property type="evidence" value="ECO:0000314"/>
    <property type="project" value="CGD"/>
</dbReference>
<dbReference type="GO" id="GO:0005615">
    <property type="term" value="C:extracellular space"/>
    <property type="evidence" value="ECO:0000318"/>
    <property type="project" value="GO_Central"/>
</dbReference>
<dbReference type="GO" id="GO:0009277">
    <property type="term" value="C:fungal-type cell wall"/>
    <property type="evidence" value="ECO:0000314"/>
    <property type="project" value="CGD"/>
</dbReference>
<dbReference type="GO" id="GO:0000328">
    <property type="term" value="C:fungal-type vacuole lumen"/>
    <property type="evidence" value="ECO:0007669"/>
    <property type="project" value="EnsemblFungi"/>
</dbReference>
<dbReference type="GO" id="GO:0016020">
    <property type="term" value="C:membrane"/>
    <property type="evidence" value="ECO:0000318"/>
    <property type="project" value="GO_Central"/>
</dbReference>
<dbReference type="GO" id="GO:0005771">
    <property type="term" value="C:multivesicular body"/>
    <property type="evidence" value="ECO:0007669"/>
    <property type="project" value="EnsemblFungi"/>
</dbReference>
<dbReference type="GO" id="GO:0061957">
    <property type="term" value="C:NVT complex"/>
    <property type="evidence" value="ECO:0007669"/>
    <property type="project" value="EnsemblFungi"/>
</dbReference>
<dbReference type="GO" id="GO:0070006">
    <property type="term" value="F:metalloaminopeptidase activity"/>
    <property type="evidence" value="ECO:0000314"/>
    <property type="project" value="CGD"/>
</dbReference>
<dbReference type="GO" id="GO:0042277">
    <property type="term" value="F:peptide binding"/>
    <property type="evidence" value="ECO:0000318"/>
    <property type="project" value="GO_Central"/>
</dbReference>
<dbReference type="GO" id="GO:0008236">
    <property type="term" value="F:serine-type peptidase activity"/>
    <property type="evidence" value="ECO:0000314"/>
    <property type="project" value="CGD"/>
</dbReference>
<dbReference type="GO" id="GO:0008270">
    <property type="term" value="F:zinc ion binding"/>
    <property type="evidence" value="ECO:0000318"/>
    <property type="project" value="GO_Central"/>
</dbReference>
<dbReference type="GO" id="GO:0120113">
    <property type="term" value="P:cytoplasm to vacuole targeting by the NVT pathway"/>
    <property type="evidence" value="ECO:0007669"/>
    <property type="project" value="EnsemblFungi"/>
</dbReference>
<dbReference type="GO" id="GO:0043171">
    <property type="term" value="P:peptide catabolic process"/>
    <property type="evidence" value="ECO:0000318"/>
    <property type="project" value="GO_Central"/>
</dbReference>
<dbReference type="GO" id="GO:0006508">
    <property type="term" value="P:proteolysis"/>
    <property type="evidence" value="ECO:0000318"/>
    <property type="project" value="GO_Central"/>
</dbReference>
<dbReference type="CDD" id="cd09601">
    <property type="entry name" value="M1_APN-Q_like"/>
    <property type="match status" value="1"/>
</dbReference>
<dbReference type="FunFam" id="1.10.390.10:FF:000001">
    <property type="entry name" value="Aminopeptidase"/>
    <property type="match status" value="1"/>
</dbReference>
<dbReference type="FunFam" id="1.25.50.20:FF:000002">
    <property type="entry name" value="Aminopeptidase"/>
    <property type="match status" value="1"/>
</dbReference>
<dbReference type="FunFam" id="2.60.40.1730:FF:000002">
    <property type="entry name" value="Aminopeptidase"/>
    <property type="match status" value="1"/>
</dbReference>
<dbReference type="FunFam" id="2.60.40.1910:FF:000004">
    <property type="entry name" value="Aminopeptidase"/>
    <property type="match status" value="1"/>
</dbReference>
<dbReference type="Gene3D" id="1.25.50.20">
    <property type="match status" value="1"/>
</dbReference>
<dbReference type="Gene3D" id="2.60.40.1910">
    <property type="match status" value="1"/>
</dbReference>
<dbReference type="Gene3D" id="1.10.390.10">
    <property type="entry name" value="Neutral Protease Domain 2"/>
    <property type="match status" value="1"/>
</dbReference>
<dbReference type="Gene3D" id="2.60.40.1730">
    <property type="entry name" value="tricorn interacting facor f3 domain"/>
    <property type="match status" value="1"/>
</dbReference>
<dbReference type="InterPro" id="IPR045357">
    <property type="entry name" value="Aminopeptidase_N-like_N"/>
</dbReference>
<dbReference type="InterPro" id="IPR042097">
    <property type="entry name" value="Aminopeptidase_N-like_N_sf"/>
</dbReference>
<dbReference type="InterPro" id="IPR024571">
    <property type="entry name" value="ERAP1-like_C_dom"/>
</dbReference>
<dbReference type="InterPro" id="IPR034016">
    <property type="entry name" value="M1_APN-typ"/>
</dbReference>
<dbReference type="InterPro" id="IPR001930">
    <property type="entry name" value="Peptidase_M1"/>
</dbReference>
<dbReference type="InterPro" id="IPR050344">
    <property type="entry name" value="Peptidase_M1_aminopeptidases"/>
</dbReference>
<dbReference type="InterPro" id="IPR014782">
    <property type="entry name" value="Peptidase_M1_dom"/>
</dbReference>
<dbReference type="InterPro" id="IPR027268">
    <property type="entry name" value="Peptidase_M4/M1_CTD_sf"/>
</dbReference>
<dbReference type="PANTHER" id="PTHR11533">
    <property type="entry name" value="PROTEASE M1 ZINC METALLOPROTEASE"/>
    <property type="match status" value="1"/>
</dbReference>
<dbReference type="PANTHER" id="PTHR11533:SF174">
    <property type="entry name" value="PUROMYCIN-SENSITIVE AMINOPEPTIDASE-RELATED"/>
    <property type="match status" value="1"/>
</dbReference>
<dbReference type="Pfam" id="PF11838">
    <property type="entry name" value="ERAP1_C"/>
    <property type="match status" value="1"/>
</dbReference>
<dbReference type="Pfam" id="PF01433">
    <property type="entry name" value="Peptidase_M1"/>
    <property type="match status" value="1"/>
</dbReference>
<dbReference type="Pfam" id="PF17900">
    <property type="entry name" value="Peptidase_M1_N"/>
    <property type="match status" value="1"/>
</dbReference>
<dbReference type="PRINTS" id="PR00756">
    <property type="entry name" value="ALADIPTASE"/>
</dbReference>
<dbReference type="SUPFAM" id="SSF63737">
    <property type="entry name" value="Leukotriene A4 hydrolase N-terminal domain"/>
    <property type="match status" value="1"/>
</dbReference>
<dbReference type="SUPFAM" id="SSF55486">
    <property type="entry name" value="Metalloproteases ('zincins'), catalytic domain"/>
    <property type="match status" value="1"/>
</dbReference>
<dbReference type="PROSITE" id="PS00142">
    <property type="entry name" value="ZINC_PROTEASE"/>
    <property type="match status" value="1"/>
</dbReference>
<gene>
    <name type="primary">APE2</name>
    <name type="ordered locus">CAALFM_C104400CA</name>
    <name type="ORF">CaO19.12664</name>
    <name type="ORF">CaO19.5197</name>
</gene>
<accession>Q59KZ1</accession>
<accession>A0A1D8PDA3</accession>
<organism>
    <name type="scientific">Candida albicans (strain SC5314 / ATCC MYA-2876)</name>
    <name type="common">Yeast</name>
    <dbReference type="NCBI Taxonomy" id="237561"/>
    <lineage>
        <taxon>Eukaryota</taxon>
        <taxon>Fungi</taxon>
        <taxon>Dikarya</taxon>
        <taxon>Ascomycota</taxon>
        <taxon>Saccharomycotina</taxon>
        <taxon>Pichiomycetes</taxon>
        <taxon>Debaryomycetaceae</taxon>
        <taxon>Candida/Lodderomyces clade</taxon>
        <taxon>Candida</taxon>
    </lineage>
</organism>
<reference key="1">
    <citation type="journal article" date="2004" name="Proc. Natl. Acad. Sci. U.S.A.">
        <title>The diploid genome sequence of Candida albicans.</title>
        <authorList>
            <person name="Jones T."/>
            <person name="Federspiel N.A."/>
            <person name="Chibana H."/>
            <person name="Dungan J."/>
            <person name="Kalman S."/>
            <person name="Magee B.B."/>
            <person name="Newport G."/>
            <person name="Thorstenson Y.R."/>
            <person name="Agabian N."/>
            <person name="Magee P.T."/>
            <person name="Davis R.W."/>
            <person name="Scherer S."/>
        </authorList>
    </citation>
    <scope>NUCLEOTIDE SEQUENCE [LARGE SCALE GENOMIC DNA]</scope>
    <source>
        <strain>SC5314 / ATCC MYA-2876</strain>
    </source>
</reference>
<reference key="2">
    <citation type="journal article" date="2007" name="Genome Biol.">
        <title>Assembly of the Candida albicans genome into sixteen supercontigs aligned on the eight chromosomes.</title>
        <authorList>
            <person name="van het Hoog M."/>
            <person name="Rast T.J."/>
            <person name="Martchenko M."/>
            <person name="Grindle S."/>
            <person name="Dignard D."/>
            <person name="Hogues H."/>
            <person name="Cuomo C."/>
            <person name="Berriman M."/>
            <person name="Scherer S."/>
            <person name="Magee B.B."/>
            <person name="Whiteway M."/>
            <person name="Chibana H."/>
            <person name="Nantel A."/>
            <person name="Magee P.T."/>
        </authorList>
    </citation>
    <scope>GENOME REANNOTATION</scope>
    <source>
        <strain>SC5314 / ATCC MYA-2876</strain>
    </source>
</reference>
<reference key="3">
    <citation type="journal article" date="2013" name="Genome Biol.">
        <title>Assembly of a phased diploid Candida albicans genome facilitates allele-specific measurements and provides a simple model for repeat and indel structure.</title>
        <authorList>
            <person name="Muzzey D."/>
            <person name="Schwartz K."/>
            <person name="Weissman J.S."/>
            <person name="Sherlock G."/>
        </authorList>
    </citation>
    <scope>NUCLEOTIDE SEQUENCE [LARGE SCALE GENOMIC DNA]</scope>
    <scope>GENOME REANNOTATION</scope>
    <source>
        <strain>SC5314 / ATCC MYA-2876</strain>
    </source>
</reference>
<reference key="4">
    <citation type="journal article" date="2008" name="FEMS Yeast Res.">
        <title>Identification and characterization of CaApe2 -- a neutral arginine/alanine/leucine-specific metallo-aminopeptidase from Candida albicans.</title>
        <authorList>
            <person name="Klinke T."/>
            <person name="Rump A."/>
            <person name="Poenisch R."/>
            <person name="Schellenberger W."/>
            <person name="Mueller E.-C."/>
            <person name="Otto A."/>
            <person name="Klimm W."/>
            <person name="Kriegel T.M."/>
        </authorList>
    </citation>
    <scope>PROTEIN SEQUENCE OF 58-70</scope>
    <scope>ACETYLATION AT SER-58</scope>
    <scope>GENE MODEL REVISION</scope>
    <scope>IDENTIFICATION BY MASS SPECTROMETRY</scope>
    <scope>FUNCTION</scope>
    <scope>SUBCELLULAR LOCATION</scope>
    <scope>BIOPHYSICOCHEMICAL PROPERTIES</scope>
    <source>
        <strain>ATCC 2091 / CBS 2730 / DSM 1665 / CIP 1180.79 / NBRC 1393</strain>
    </source>
</reference>
<keyword id="KW-0007">Acetylation</keyword>
<keyword id="KW-0031">Aminopeptidase</keyword>
<keyword id="KW-0134">Cell wall</keyword>
<keyword id="KW-0903">Direct protein sequencing</keyword>
<keyword id="KW-0325">Glycoprotein</keyword>
<keyword id="KW-0378">Hydrolase</keyword>
<keyword id="KW-0479">Metal-binding</keyword>
<keyword id="KW-0482">Metalloprotease</keyword>
<keyword id="KW-0645">Protease</keyword>
<keyword id="KW-1185">Reference proteome</keyword>
<keyword id="KW-0964">Secreted</keyword>
<keyword id="KW-0732">Signal</keyword>
<keyword id="KW-0862">Zinc</keyword>
<comment type="function">
    <text evidence="4">Metalloprotease that specifically hydrolyzes peptides with N-terminal alanine, arginine and leucine residues.</text>
</comment>
<comment type="cofactor">
    <cofactor evidence="1">
        <name>Zn(2+)</name>
        <dbReference type="ChEBI" id="CHEBI:29105"/>
    </cofactor>
    <text evidence="1">Binds 1 zinc ion per subunit.</text>
</comment>
<comment type="activity regulation">
    <text>Inactivated by metal-chelating agents phenanthroline and EDTA. Inhibited by bestatin, an aminopeptidase inhibitor. Not inhibited by pepstatin A and PMSF, inhibitors of aspartic and the serine proteases, respectively. Not inhibited by carboxypeptidase inhibitor.</text>
</comment>
<comment type="biophysicochemical properties">
    <kinetics>
        <KM evidence="4">457 uM for L-alanine-AMC</KM>
        <KM evidence="4">46.9 uM for L-arginine-AMC</KM>
        <KM evidence="4">82 uM for L-leucine-AMC</KM>
        <Vmax evidence="4">16.9 umol/min/mg enzyme for L-alanine-AMC</Vmax>
        <Vmax evidence="4">25.4 umol/min/mg enzyme for L-arginine-AMC</Vmax>
        <Vmax evidence="4">18.4 umol/min/mg enzyme for L-leucine-AMC</Vmax>
    </kinetics>
    <phDependence>
        <text evidence="4">Optimum pH is 7.2.</text>
    </phDependence>
    <temperatureDependence>
        <text evidence="4">Optimum temperature is 30 degrees Celsius.</text>
    </temperatureDependence>
</comment>
<comment type="subcellular location">
    <subcellularLocation>
        <location evidence="4">Secreted</location>
        <location evidence="4">Cell wall</location>
    </subcellularLocation>
</comment>
<comment type="similarity">
    <text evidence="6">Belongs to the peptidase M1 family.</text>
</comment>
<evidence type="ECO:0000250" key="1"/>
<evidence type="ECO:0000255" key="2"/>
<evidence type="ECO:0000255" key="3">
    <source>
        <dbReference type="PROSITE-ProRule" id="PRU10095"/>
    </source>
</evidence>
<evidence type="ECO:0000269" key="4">
    <source>
    </source>
</evidence>
<evidence type="ECO:0000303" key="5">
    <source>
    </source>
</evidence>
<evidence type="ECO:0000305" key="6"/>
<feature type="signal peptide" evidence="5">
    <location>
        <begin position="1"/>
        <end position="45"/>
    </location>
</feature>
<feature type="propeptide" id="PRO_0000434587" evidence="5">
    <location>
        <begin position="46"/>
        <end position="57"/>
    </location>
</feature>
<feature type="chain" id="PRO_0000370249" description="Aminopeptidase 2">
    <location>
        <begin position="58"/>
        <end position="924"/>
    </location>
</feature>
<feature type="active site" description="Proton acceptor" evidence="3">
    <location>
        <position position="364"/>
    </location>
</feature>
<feature type="binding site" evidence="1">
    <location>
        <position position="194"/>
    </location>
    <ligand>
        <name>substrate</name>
    </ligand>
</feature>
<feature type="binding site" evidence="1">
    <location>
        <begin position="327"/>
        <end position="331"/>
    </location>
    <ligand>
        <name>substrate</name>
    </ligand>
</feature>
<feature type="binding site" evidence="3">
    <location>
        <position position="363"/>
    </location>
    <ligand>
        <name>Zn(2+)</name>
        <dbReference type="ChEBI" id="CHEBI:29105"/>
        <note>catalytic</note>
    </ligand>
</feature>
<feature type="binding site" evidence="3">
    <location>
        <position position="367"/>
    </location>
    <ligand>
        <name>Zn(2+)</name>
        <dbReference type="ChEBI" id="CHEBI:29105"/>
        <note>catalytic</note>
    </ligand>
</feature>
<feature type="binding site" evidence="3">
    <location>
        <position position="386"/>
    </location>
    <ligand>
        <name>Zn(2+)</name>
        <dbReference type="ChEBI" id="CHEBI:29105"/>
        <note>catalytic</note>
    </ligand>
</feature>
<feature type="site" description="Transition state stabilizer" evidence="1">
    <location>
        <position position="449"/>
    </location>
</feature>
<feature type="modified residue" description="N-acetylserine; partial" evidence="4">
    <location>
        <position position="58"/>
    </location>
</feature>
<feature type="glycosylation site" description="N-linked (GlcNAc...) asparagine" evidence="2">
    <location>
        <position position="92"/>
    </location>
</feature>
<feature type="glycosylation site" description="N-linked (GlcNAc...) asparagine" evidence="2">
    <location>
        <position position="229"/>
    </location>
</feature>
<feature type="sequence conflict" description="In Ref. 4; AA sequence." evidence="6" ref="4">
    <original>K</original>
    <variation>N</variation>
    <location>
        <position position="67"/>
    </location>
</feature>
<protein>
    <recommendedName>
        <fullName>Aminopeptidase 2</fullName>
        <ecNumber>3.4.11.-</ecNumber>
    </recommendedName>
</protein>